<dbReference type="EC" id="2.7.7.3" evidence="1"/>
<dbReference type="EMBL" id="BX251410">
    <property type="protein sequence ID" value="CAD66873.1"/>
    <property type="molecule type" value="Genomic_DNA"/>
</dbReference>
<dbReference type="RefSeq" id="WP_011096154.1">
    <property type="nucleotide sequence ID" value="NC_004551.1"/>
</dbReference>
<dbReference type="SMR" id="Q83I84"/>
<dbReference type="GeneID" id="67387972"/>
<dbReference type="KEGG" id="tws:TW196"/>
<dbReference type="HOGENOM" id="CLU_100149_0_1_11"/>
<dbReference type="UniPathway" id="UPA00241">
    <property type="reaction ID" value="UER00355"/>
</dbReference>
<dbReference type="GO" id="GO:0005737">
    <property type="term" value="C:cytoplasm"/>
    <property type="evidence" value="ECO:0007669"/>
    <property type="project" value="UniProtKB-SubCell"/>
</dbReference>
<dbReference type="GO" id="GO:0005524">
    <property type="term" value="F:ATP binding"/>
    <property type="evidence" value="ECO:0007669"/>
    <property type="project" value="UniProtKB-KW"/>
</dbReference>
<dbReference type="GO" id="GO:0004595">
    <property type="term" value="F:pantetheine-phosphate adenylyltransferase activity"/>
    <property type="evidence" value="ECO:0007669"/>
    <property type="project" value="UniProtKB-UniRule"/>
</dbReference>
<dbReference type="GO" id="GO:0015937">
    <property type="term" value="P:coenzyme A biosynthetic process"/>
    <property type="evidence" value="ECO:0007669"/>
    <property type="project" value="UniProtKB-UniRule"/>
</dbReference>
<dbReference type="Gene3D" id="3.40.50.620">
    <property type="entry name" value="HUPs"/>
    <property type="match status" value="1"/>
</dbReference>
<dbReference type="HAMAP" id="MF_00151">
    <property type="entry name" value="PPAT_bact"/>
    <property type="match status" value="1"/>
</dbReference>
<dbReference type="InterPro" id="IPR004821">
    <property type="entry name" value="Cyt_trans-like"/>
</dbReference>
<dbReference type="InterPro" id="IPR001980">
    <property type="entry name" value="PPAT"/>
</dbReference>
<dbReference type="InterPro" id="IPR014729">
    <property type="entry name" value="Rossmann-like_a/b/a_fold"/>
</dbReference>
<dbReference type="NCBIfam" id="TIGR01510">
    <property type="entry name" value="coaD_prev_kdtB"/>
    <property type="match status" value="1"/>
</dbReference>
<dbReference type="NCBIfam" id="TIGR00125">
    <property type="entry name" value="cyt_tran_rel"/>
    <property type="match status" value="1"/>
</dbReference>
<dbReference type="PANTHER" id="PTHR21342">
    <property type="entry name" value="PHOSPHOPANTETHEINE ADENYLYLTRANSFERASE"/>
    <property type="match status" value="1"/>
</dbReference>
<dbReference type="PANTHER" id="PTHR21342:SF1">
    <property type="entry name" value="PHOSPHOPANTETHEINE ADENYLYLTRANSFERASE"/>
    <property type="match status" value="1"/>
</dbReference>
<dbReference type="Pfam" id="PF01467">
    <property type="entry name" value="CTP_transf_like"/>
    <property type="match status" value="1"/>
</dbReference>
<dbReference type="PRINTS" id="PR01020">
    <property type="entry name" value="LPSBIOSNTHSS"/>
</dbReference>
<dbReference type="SUPFAM" id="SSF52374">
    <property type="entry name" value="Nucleotidylyl transferase"/>
    <property type="match status" value="1"/>
</dbReference>
<comment type="function">
    <text evidence="1">Reversibly transfers an adenylyl group from ATP to 4'-phosphopantetheine, yielding dephospho-CoA (dPCoA) and pyrophosphate.</text>
</comment>
<comment type="catalytic activity">
    <reaction evidence="1">
        <text>(R)-4'-phosphopantetheine + ATP + H(+) = 3'-dephospho-CoA + diphosphate</text>
        <dbReference type="Rhea" id="RHEA:19801"/>
        <dbReference type="ChEBI" id="CHEBI:15378"/>
        <dbReference type="ChEBI" id="CHEBI:30616"/>
        <dbReference type="ChEBI" id="CHEBI:33019"/>
        <dbReference type="ChEBI" id="CHEBI:57328"/>
        <dbReference type="ChEBI" id="CHEBI:61723"/>
        <dbReference type="EC" id="2.7.7.3"/>
    </reaction>
</comment>
<comment type="cofactor">
    <cofactor evidence="1">
        <name>Mg(2+)</name>
        <dbReference type="ChEBI" id="CHEBI:18420"/>
    </cofactor>
</comment>
<comment type="pathway">
    <text evidence="1">Cofactor biosynthesis; coenzyme A biosynthesis; CoA from (R)-pantothenate: step 4/5.</text>
</comment>
<comment type="subunit">
    <text evidence="1">Homohexamer.</text>
</comment>
<comment type="subcellular location">
    <subcellularLocation>
        <location evidence="1">Cytoplasm</location>
    </subcellularLocation>
</comment>
<comment type="similarity">
    <text evidence="1">Belongs to the bacterial CoaD family.</text>
</comment>
<organism>
    <name type="scientific">Tropheryma whipplei (strain TW08/27)</name>
    <name type="common">Whipple's bacillus</name>
    <dbReference type="NCBI Taxonomy" id="218496"/>
    <lineage>
        <taxon>Bacteria</taxon>
        <taxon>Bacillati</taxon>
        <taxon>Actinomycetota</taxon>
        <taxon>Actinomycetes</taxon>
        <taxon>Micrococcales</taxon>
        <taxon>Tropherymataceae</taxon>
        <taxon>Tropheryma</taxon>
    </lineage>
</organism>
<accession>Q83I84</accession>
<reference key="1">
    <citation type="journal article" date="2003" name="Lancet">
        <title>Sequencing and analysis of the genome of the Whipple's disease bacterium Tropheryma whipplei.</title>
        <authorList>
            <person name="Bentley S.D."/>
            <person name="Maiwald M."/>
            <person name="Murphy L.D."/>
            <person name="Pallen M.J."/>
            <person name="Yeats C.A."/>
            <person name="Dover L.G."/>
            <person name="Norbertczak H.T."/>
            <person name="Besra G.S."/>
            <person name="Quail M.A."/>
            <person name="Harris D.E."/>
            <person name="von Herbay A."/>
            <person name="Goble A."/>
            <person name="Rutter S."/>
            <person name="Squares R."/>
            <person name="Squares S."/>
            <person name="Barrell B.G."/>
            <person name="Parkhill J."/>
            <person name="Relman D.A."/>
        </authorList>
    </citation>
    <scope>NUCLEOTIDE SEQUENCE [LARGE SCALE GENOMIC DNA]</scope>
    <source>
        <strain>TW08/27</strain>
    </source>
</reference>
<protein>
    <recommendedName>
        <fullName evidence="1">Phosphopantetheine adenylyltransferase</fullName>
        <ecNumber evidence="1">2.7.7.3</ecNumber>
    </recommendedName>
    <alternativeName>
        <fullName evidence="1">Dephospho-CoA pyrophosphorylase</fullName>
    </alternativeName>
    <alternativeName>
        <fullName evidence="1">Pantetheine-phosphate adenylyltransferase</fullName>
        <shortName evidence="1">PPAT</shortName>
    </alternativeName>
</protein>
<name>COAD_TROW8</name>
<gene>
    <name evidence="1" type="primary">coaD</name>
    <name type="ordered locus">TW196</name>
</gene>
<feature type="chain" id="PRO_0000156301" description="Phosphopantetheine adenylyltransferase">
    <location>
        <begin position="1"/>
        <end position="176"/>
    </location>
</feature>
<feature type="binding site" evidence="1">
    <location>
        <begin position="11"/>
        <end position="12"/>
    </location>
    <ligand>
        <name>ATP</name>
        <dbReference type="ChEBI" id="CHEBI:30616"/>
    </ligand>
</feature>
<feature type="binding site" evidence="1">
    <location>
        <position position="11"/>
    </location>
    <ligand>
        <name>substrate</name>
    </ligand>
</feature>
<feature type="binding site" evidence="1">
    <location>
        <position position="19"/>
    </location>
    <ligand>
        <name>ATP</name>
        <dbReference type="ChEBI" id="CHEBI:30616"/>
    </ligand>
</feature>
<feature type="binding site" evidence="1">
    <location>
        <position position="43"/>
    </location>
    <ligand>
        <name>substrate</name>
    </ligand>
</feature>
<feature type="binding site" evidence="1">
    <location>
        <position position="93"/>
    </location>
    <ligand>
        <name>substrate</name>
    </ligand>
</feature>
<feature type="binding site" evidence="1">
    <location>
        <position position="107"/>
    </location>
    <ligand>
        <name>substrate</name>
    </ligand>
</feature>
<feature type="binding site" evidence="1">
    <location>
        <position position="117"/>
    </location>
    <ligand>
        <name>ATP</name>
        <dbReference type="ChEBI" id="CHEBI:30616"/>
    </ligand>
</feature>
<feature type="binding site" evidence="1">
    <location>
        <begin position="141"/>
        <end position="147"/>
    </location>
    <ligand>
        <name>ATP</name>
        <dbReference type="ChEBI" id="CHEBI:30616"/>
    </ligand>
</feature>
<feature type="site" description="Transition state stabilizer" evidence="1">
    <location>
        <position position="19"/>
    </location>
</feature>
<sequence length="176" mass="19254">MSNRIAVVPGTFDPVTRGHMDILTRTSRIFNTLYVLVANNPDKTPLLPMHDRVDLVGQALEEYGFPRSEPKCDSESDRNGPIVKIHRFEKGLLVDCCKQLGATVIVRGLISADAHREASMAYANRNMSGIETVFILPDPPLSVVSSSMVRQLIALGGDISPYVPACVTRFFGTHSG</sequence>
<keyword id="KW-0067">ATP-binding</keyword>
<keyword id="KW-0173">Coenzyme A biosynthesis</keyword>
<keyword id="KW-0963">Cytoplasm</keyword>
<keyword id="KW-0460">Magnesium</keyword>
<keyword id="KW-0547">Nucleotide-binding</keyword>
<keyword id="KW-0548">Nucleotidyltransferase</keyword>
<keyword id="KW-0808">Transferase</keyword>
<evidence type="ECO:0000255" key="1">
    <source>
        <dbReference type="HAMAP-Rule" id="MF_00151"/>
    </source>
</evidence>
<proteinExistence type="inferred from homology"/>